<reference key="1">
    <citation type="journal article" date="1999" name="Mol. Carcinog.">
        <title>Differential regulation of c-fos expression in estrogen-induced hamster renal tumors compared with kidney not due to creation of an estrogen-response element by point mutation in the gene's flanking sequence.</title>
        <authorList>
            <person name="Sarabia S.F."/>
            <person name="Liehr J.G."/>
        </authorList>
    </citation>
    <scope>NUCLEOTIDE SEQUENCE [GENOMIC DNA]</scope>
    <source>
        <tissue>Kidney</tissue>
    </source>
</reference>
<dbReference type="EMBL" id="AF061881">
    <property type="protein sequence ID" value="AAC19354.1"/>
    <property type="molecule type" value="Genomic_DNA"/>
</dbReference>
<dbReference type="SMR" id="O88479"/>
<dbReference type="STRING" id="10036.ENSMAUP00000021801"/>
<dbReference type="eggNOG" id="KOG1414">
    <property type="taxonomic scope" value="Eukaryota"/>
</dbReference>
<dbReference type="Proteomes" id="UP000189706">
    <property type="component" value="Unplaced"/>
</dbReference>
<dbReference type="GO" id="GO:0005829">
    <property type="term" value="C:cytosol"/>
    <property type="evidence" value="ECO:0007669"/>
    <property type="project" value="UniProtKB-SubCell"/>
</dbReference>
<dbReference type="GO" id="GO:0005783">
    <property type="term" value="C:endoplasmic reticulum"/>
    <property type="evidence" value="ECO:0007669"/>
    <property type="project" value="UniProtKB-SubCell"/>
</dbReference>
<dbReference type="GO" id="GO:0005634">
    <property type="term" value="C:nucleus"/>
    <property type="evidence" value="ECO:0007669"/>
    <property type="project" value="UniProtKB-SubCell"/>
</dbReference>
<dbReference type="GO" id="GO:0000981">
    <property type="term" value="F:DNA-binding transcription factor activity, RNA polymerase II-specific"/>
    <property type="evidence" value="ECO:0007669"/>
    <property type="project" value="TreeGrafter"/>
</dbReference>
<dbReference type="GO" id="GO:0000978">
    <property type="term" value="F:RNA polymerase II cis-regulatory region sequence-specific DNA binding"/>
    <property type="evidence" value="ECO:0007669"/>
    <property type="project" value="TreeGrafter"/>
</dbReference>
<dbReference type="CDD" id="cd14721">
    <property type="entry name" value="bZIP_Fos"/>
    <property type="match status" value="1"/>
</dbReference>
<dbReference type="FunFam" id="1.20.5.170:FF:000006">
    <property type="entry name" value="fos-related antigen 2 isoform X1"/>
    <property type="match status" value="1"/>
</dbReference>
<dbReference type="Gene3D" id="1.20.5.170">
    <property type="match status" value="1"/>
</dbReference>
<dbReference type="InterPro" id="IPR000837">
    <property type="entry name" value="AP-1"/>
</dbReference>
<dbReference type="InterPro" id="IPR004827">
    <property type="entry name" value="bZIP"/>
</dbReference>
<dbReference type="InterPro" id="IPR046347">
    <property type="entry name" value="bZIP_sf"/>
</dbReference>
<dbReference type="PANTHER" id="PTHR23351">
    <property type="entry name" value="FOS TRANSCRIPTION FACTOR-RELATED"/>
    <property type="match status" value="1"/>
</dbReference>
<dbReference type="PANTHER" id="PTHR23351:SF4">
    <property type="entry name" value="PROTEIN C-FOS"/>
    <property type="match status" value="1"/>
</dbReference>
<dbReference type="Pfam" id="PF00170">
    <property type="entry name" value="bZIP_1"/>
    <property type="match status" value="1"/>
</dbReference>
<dbReference type="PRINTS" id="PR00042">
    <property type="entry name" value="LEUZIPPRFOS"/>
</dbReference>
<dbReference type="SMART" id="SM00338">
    <property type="entry name" value="BRLZ"/>
    <property type="match status" value="1"/>
</dbReference>
<dbReference type="SUPFAM" id="SSF57959">
    <property type="entry name" value="Leucine zipper domain"/>
    <property type="match status" value="1"/>
</dbReference>
<dbReference type="PROSITE" id="PS50217">
    <property type="entry name" value="BZIP"/>
    <property type="match status" value="1"/>
</dbReference>
<dbReference type="PROSITE" id="PS00036">
    <property type="entry name" value="BZIP_BASIC"/>
    <property type="match status" value="1"/>
</dbReference>
<comment type="function">
    <text evidence="1">Nuclear phosphoprotein which forms a tight but non-covalently linked complex with the JUN/AP-1 transcription factor. On TGF-beta activation, forms a multimeric SMAD3/SMAD4/JUN/FOS complex, at the AP1/SMAD-binding site to regulate TGF-beta-mediated signaling. Has a critical function in regulating the development of cells destined to form and maintain the skeleton. It is thought to have an important role in signal transduction, cell proliferation and differentiation (By similarity). In growing cells, activates phospholipid synthesis, possibly by activating CDS1 and PI4K2A. This activity requires Tyr-dephosphorylation and association with the endoplasmic reticulum (By similarity).</text>
</comment>
<comment type="subunit">
    <text evidence="2 3 4">Heterodimer; with JUN (By similarity). Component of the SMAD3/SMAD4/JUN/FOS complex required for synergistic TGF-beta-mediated transcription at the AP1-binding site (By similarity). Interacts with SMAD3; the interaction is weak even on TGF-beta activation (By similarity). Interacts with MAFB (By similarity). Interacts with TSC22D3 (via N-terminus); this interaction inhibits the binding of active AP1 to its target DNA (By similarity). Interacts with CDS1 and PI4K2A (By similarity). Interacts (via bZIP domain and leucine-zipper region) with the multiprotein chromatin-remodeling complexes SWI/SNF: SWI/SNF-A (BAF) subunits SMARCB1, SMARCC2 and SMARCD1 (By similarity). Interacts (via bZIP domain and leucine-zipper region) with ARID1A (By similarity).</text>
</comment>
<comment type="subcellular location">
    <subcellularLocation>
        <location evidence="5">Nucleus</location>
    </subcellularLocation>
    <subcellularLocation>
        <location evidence="1">Endoplasmic reticulum</location>
    </subcellularLocation>
    <subcellularLocation>
        <location evidence="1">Cytoplasm</location>
        <location evidence="1">Cytosol</location>
    </subcellularLocation>
    <text evidence="1">In quiescent cells, present in very small amounts in the cytosol. Following induction of cell growth, first localizes to the endoplasmic reticulum and only later to the nucleus. Localization at the endoplasmic reticulum requires dephosphorylation at Tyr-10 and Tyr-30 (By similarity).</text>
</comment>
<comment type="PTM">
    <text evidence="1">Phosphorylated in the C-terminal upon stimulation by nerve growth factor (NGF) and epidermal growth factor (EGF). Phosphorylated, in vitro, by MAPK and RSK1. Phosphorylation on both Ser-363 and Ser-375 by MAPK1/2 and RSK1/2 leads to protein stabilization with phosphorylation on Ser-375 being the major site for protein stabilization on NGF stimulation. Phosphorylation on Ser-363 and Ser-375 primes further phosphorylations on Thr-326 and Thr-332 through promoting docking of MAPK to the DEF domain. Phosphorylation on Thr-232, induced by HA-RAS, activates the transcriptional activity and antagonizes sumoylation. Phosphorylation on Ser-363 by RSK2 in osteoblasts contributes to osteoblast transformation (By similarity).</text>
</comment>
<comment type="PTM">
    <text evidence="1">Constitutively sumoylated with SUMO1, SUMO2 and SUMO3. Desumoylated by SENP2. Sumoylation requires heterodimerization with JUN and is enhanced by mitogen stimulation. Sumoylation inhibits the AP-1 transcriptional activity and is, itself, inhibited by Ras-activated phosphorylation on Thr-232 (By similarity).</text>
</comment>
<comment type="PTM">
    <text evidence="1">In quiescent cells, the small amount of FOS present is phosphorylated at Tyr-10 and Tyr-30 by SRC. This Tyr-phosphorylated form is cytosolic. In growing cells, dephosphorylated by PTPN2. Dephosphorylation leads to the association with endoplasmic reticulum membranes and activation of phospholipid synthesis (By similarity).</text>
</comment>
<comment type="similarity">
    <text evidence="7">Belongs to the bZIP family. Fos subfamily.</text>
</comment>
<evidence type="ECO:0000250" key="1"/>
<evidence type="ECO:0000250" key="2">
    <source>
        <dbReference type="UniProtKB" id="P01100"/>
    </source>
</evidence>
<evidence type="ECO:0000250" key="3">
    <source>
        <dbReference type="UniProtKB" id="P01101"/>
    </source>
</evidence>
<evidence type="ECO:0000250" key="4">
    <source>
        <dbReference type="UniProtKB" id="P12841"/>
    </source>
</evidence>
<evidence type="ECO:0000255" key="5">
    <source>
        <dbReference type="PROSITE-ProRule" id="PRU00978"/>
    </source>
</evidence>
<evidence type="ECO:0000256" key="6">
    <source>
        <dbReference type="SAM" id="MobiDB-lite"/>
    </source>
</evidence>
<evidence type="ECO:0000305" key="7"/>
<organism>
    <name type="scientific">Mesocricetus auratus</name>
    <name type="common">Golden hamster</name>
    <dbReference type="NCBI Taxonomy" id="10036"/>
    <lineage>
        <taxon>Eukaryota</taxon>
        <taxon>Metazoa</taxon>
        <taxon>Chordata</taxon>
        <taxon>Craniata</taxon>
        <taxon>Vertebrata</taxon>
        <taxon>Euteleostomi</taxon>
        <taxon>Mammalia</taxon>
        <taxon>Eutheria</taxon>
        <taxon>Euarchontoglires</taxon>
        <taxon>Glires</taxon>
        <taxon>Rodentia</taxon>
        <taxon>Myomorpha</taxon>
        <taxon>Muroidea</taxon>
        <taxon>Cricetidae</taxon>
        <taxon>Cricetinae</taxon>
        <taxon>Mesocricetus</taxon>
    </lineage>
</organism>
<gene>
    <name type="primary">FOS</name>
</gene>
<sequence length="381" mass="41020">MMFSGFNADYEASSSRCSSASPAGDSLSYYHSPADSFSSMGSPVNAQDFCTDLSVSSANFIPTVTAISTSPDLQWLVQPTLVSSVAPSQTRAPHPYGVPTPSTGAYSRAGMVKTVSGGRAQSIGRRGKVEQLSPEEEEKRRIRRERNKMAAAKCRNRRRELTDTLQAETDQLEDEKSALQTEIANLLKEKEKLEFILAAHRPACKIPDDLGFPEEMFVASLDLTGGLPEATTPESEEAFSLPLLNDPEPKPSLEPVKSISNVELKAEPFDDFLFPASSRPSGSETTARSVPDMDLSGSFYAADWEPLHSSSLGMGPMVTELEPLCTPVVTCTPSCTTYTSSFVFTYPEADSFPSCAAAHRKGSSSNEPSSDSLSSPTLLAL</sequence>
<feature type="chain" id="PRO_0000076466" description="Protein c-Fos">
    <location>
        <begin position="1"/>
        <end position="381"/>
    </location>
</feature>
<feature type="domain" description="bZIP" evidence="5">
    <location>
        <begin position="137"/>
        <end position="200"/>
    </location>
</feature>
<feature type="region of interest" description="Disordered" evidence="6">
    <location>
        <begin position="118"/>
        <end position="138"/>
    </location>
</feature>
<feature type="region of interest" description="Basic motif; required for the activation of phospholipid synthesis, but not for CDS1-binding" evidence="5">
    <location>
        <begin position="139"/>
        <end position="159"/>
    </location>
</feature>
<feature type="region of interest" description="Leucine-zipper" evidence="5">
    <location>
        <begin position="165"/>
        <end position="193"/>
    </location>
</feature>
<feature type="region of interest" description="Disordered" evidence="6">
    <location>
        <begin position="355"/>
        <end position="381"/>
    </location>
</feature>
<feature type="compositionally biased region" description="Low complexity" evidence="6">
    <location>
        <begin position="363"/>
        <end position="375"/>
    </location>
</feature>
<feature type="modified residue" description="Phosphotyrosine; by SRC" evidence="2">
    <location>
        <position position="10"/>
    </location>
</feature>
<feature type="modified residue" description="Phosphotyrosine; by SRC" evidence="2">
    <location>
        <position position="30"/>
    </location>
</feature>
<feature type="modified residue" description="Phosphothreonine" evidence="3">
    <location>
        <position position="232"/>
    </location>
</feature>
<feature type="modified residue" description="Phosphothreonine; by MAPK1 and MAPK3" evidence="2">
    <location>
        <position position="326"/>
    </location>
</feature>
<feature type="modified residue" description="Phosphothreonine; by MAPK1 and MAPK3" evidence="2">
    <location>
        <position position="332"/>
    </location>
</feature>
<feature type="modified residue" description="Phosphoserine; by MAPK1, MAPK3 and RPS6KA3" evidence="2">
    <location>
        <position position="363"/>
    </location>
</feature>
<feature type="modified residue" description="Phosphoserine; by MAPK1 and MAPK3" evidence="2">
    <location>
        <position position="375"/>
    </location>
</feature>
<feature type="cross-link" description="Glycyl lysine isopeptide (Lys-Gly) (interchain with G-Cter in SUMO2)" evidence="2">
    <location>
        <position position="113"/>
    </location>
</feature>
<feature type="cross-link" description="Glycyl lysine isopeptide (Lys-Gly) (interchain with G-Cter in SUMO2)" evidence="2">
    <location>
        <position position="128"/>
    </location>
</feature>
<feature type="cross-link" description="Glycyl lysine isopeptide (Lys-Gly) (interchain with G-Cter in SUMO); alternate" evidence="1">
    <location>
        <position position="265"/>
    </location>
</feature>
<feature type="cross-link" description="Glycyl lysine isopeptide (Lys-Gly) (interchain with G-Cter in SUMO2); alternate" evidence="2">
    <location>
        <position position="265"/>
    </location>
</feature>
<keyword id="KW-0963">Cytoplasm</keyword>
<keyword id="KW-0238">DNA-binding</keyword>
<keyword id="KW-0256">Endoplasmic reticulum</keyword>
<keyword id="KW-1017">Isopeptide bond</keyword>
<keyword id="KW-0539">Nucleus</keyword>
<keyword id="KW-0597">Phosphoprotein</keyword>
<keyword id="KW-0656">Proto-oncogene</keyword>
<keyword id="KW-1185">Reference proteome</keyword>
<keyword id="KW-0832">Ubl conjugation</keyword>
<proteinExistence type="inferred from homology"/>
<accession>O88479</accession>
<protein>
    <recommendedName>
        <fullName evidence="7">Protein c-Fos</fullName>
    </recommendedName>
    <alternativeName>
        <fullName>Cellular oncogene fos</fullName>
    </alternativeName>
    <alternativeName>
        <fullName evidence="7">Transcription factor AP-1 subunit c-Fos</fullName>
    </alternativeName>
</protein>
<name>FOS_MESAU</name>